<comment type="function">
    <text evidence="1">F(1)F(0) ATP synthase produces ATP from ADP in the presence of a proton or sodium gradient. F-type ATPases consist of two structural domains, F(1) containing the extramembraneous catalytic core and F(0) containing the membrane proton channel, linked together by a central stalk and a peripheral stalk. During catalysis, ATP synthesis in the catalytic domain of F(1) is coupled via a rotary mechanism of the central stalk subunits to proton translocation.</text>
</comment>
<comment type="function">
    <text evidence="1">This protein is part of the stalk that links CF(0) to CF(1). It either transmits conformational changes from CF(0) to CF(1) or is implicated in proton conduction.</text>
</comment>
<comment type="subunit">
    <text evidence="1">F-type ATPases have 2 components, F(1) - the catalytic core - and F(0) - the membrane proton channel. F(1) has five subunits: alpha(3), beta(3), gamma(1), delta(1), epsilon(1). F(0) has three main subunits: a(1), b(2) and c(10-14). The alpha and beta chains form an alternating ring which encloses part of the gamma chain. F(1) is attached to F(0) by a central stalk formed by the gamma and epsilon chains, while a peripheral stalk is formed by the delta and b chains.</text>
</comment>
<comment type="subcellular location">
    <subcellularLocation>
        <location evidence="1">Cell membrane</location>
        <topology evidence="1">Peripheral membrane protein</topology>
    </subcellularLocation>
</comment>
<comment type="similarity">
    <text evidence="1">Belongs to the ATPase delta chain family.</text>
</comment>
<protein>
    <recommendedName>
        <fullName evidence="1">ATP synthase subunit delta</fullName>
    </recommendedName>
    <alternativeName>
        <fullName evidence="1">ATP synthase F(1) sector subunit delta</fullName>
    </alternativeName>
    <alternativeName>
        <fullName evidence="1">F-type ATPase subunit delta</fullName>
        <shortName evidence="1">F-ATPase subunit delta</shortName>
    </alternativeName>
</protein>
<sequence>MIDNHYVQSSAKALSQIAFEEKKEKLFLNQLFIIKNIFSYNPEVVEYLASGSIKLENKKKFIEEIFDLIEPLILNFLLMAVEDNKIKYLDNIFLKAILTINKKLNIENGIIYTTLKLSDKKLLEIEKKLSVFLKKEVKLLNLIDKELISGYEIQVGDFKQRNNVASWIDQMALSIKKGD</sequence>
<gene>
    <name evidence="1" type="primary">atpH</name>
    <name type="ordered locus">MYPU_2690</name>
</gene>
<keyword id="KW-0066">ATP synthesis</keyword>
<keyword id="KW-1003">Cell membrane</keyword>
<keyword id="KW-0139">CF(1)</keyword>
<keyword id="KW-0375">Hydrogen ion transport</keyword>
<keyword id="KW-0406">Ion transport</keyword>
<keyword id="KW-0472">Membrane</keyword>
<keyword id="KW-1185">Reference proteome</keyword>
<keyword id="KW-0813">Transport</keyword>
<feature type="chain" id="PRO_0000193470" description="ATP synthase subunit delta">
    <location>
        <begin position="1"/>
        <end position="179"/>
    </location>
</feature>
<proteinExistence type="inferred from homology"/>
<dbReference type="EMBL" id="AL445563">
    <property type="protein sequence ID" value="CAC13442.1"/>
    <property type="molecule type" value="Genomic_DNA"/>
</dbReference>
<dbReference type="PIR" id="E90545">
    <property type="entry name" value="E90545"/>
</dbReference>
<dbReference type="RefSeq" id="WP_010925073.1">
    <property type="nucleotide sequence ID" value="NC_002771.1"/>
</dbReference>
<dbReference type="SMR" id="Q98QU2"/>
<dbReference type="STRING" id="272635.gene:17576859"/>
<dbReference type="KEGG" id="mpu:MYPU_2690"/>
<dbReference type="eggNOG" id="COG0712">
    <property type="taxonomic scope" value="Bacteria"/>
</dbReference>
<dbReference type="HOGENOM" id="CLU_085114_4_2_14"/>
<dbReference type="BioCyc" id="MPUL272635:G1GT6-270-MONOMER"/>
<dbReference type="Proteomes" id="UP000000528">
    <property type="component" value="Chromosome"/>
</dbReference>
<dbReference type="GO" id="GO:0005886">
    <property type="term" value="C:plasma membrane"/>
    <property type="evidence" value="ECO:0007669"/>
    <property type="project" value="UniProtKB-SubCell"/>
</dbReference>
<dbReference type="GO" id="GO:0045259">
    <property type="term" value="C:proton-transporting ATP synthase complex"/>
    <property type="evidence" value="ECO:0007669"/>
    <property type="project" value="UniProtKB-KW"/>
</dbReference>
<dbReference type="GO" id="GO:0046933">
    <property type="term" value="F:proton-transporting ATP synthase activity, rotational mechanism"/>
    <property type="evidence" value="ECO:0007669"/>
    <property type="project" value="UniProtKB-UniRule"/>
</dbReference>
<dbReference type="Gene3D" id="1.10.520.20">
    <property type="entry name" value="N-terminal domain of the delta subunit of the F1F0-ATP synthase"/>
    <property type="match status" value="1"/>
</dbReference>
<dbReference type="HAMAP" id="MF_01416">
    <property type="entry name" value="ATP_synth_delta_bact"/>
    <property type="match status" value="1"/>
</dbReference>
<dbReference type="InterPro" id="IPR026015">
    <property type="entry name" value="ATP_synth_OSCP/delta_N_sf"/>
</dbReference>
<dbReference type="InterPro" id="IPR020781">
    <property type="entry name" value="ATPase_OSCP/d_CS"/>
</dbReference>
<dbReference type="InterPro" id="IPR000711">
    <property type="entry name" value="ATPase_OSCP/dsu"/>
</dbReference>
<dbReference type="NCBIfam" id="TIGR01145">
    <property type="entry name" value="ATP_synt_delta"/>
    <property type="match status" value="1"/>
</dbReference>
<dbReference type="PANTHER" id="PTHR11910">
    <property type="entry name" value="ATP SYNTHASE DELTA CHAIN"/>
    <property type="match status" value="1"/>
</dbReference>
<dbReference type="Pfam" id="PF00213">
    <property type="entry name" value="OSCP"/>
    <property type="match status" value="1"/>
</dbReference>
<dbReference type="PRINTS" id="PR00125">
    <property type="entry name" value="ATPASEDELTA"/>
</dbReference>
<dbReference type="SUPFAM" id="SSF47928">
    <property type="entry name" value="N-terminal domain of the delta subunit of the F1F0-ATP synthase"/>
    <property type="match status" value="1"/>
</dbReference>
<dbReference type="PROSITE" id="PS00389">
    <property type="entry name" value="ATPASE_DELTA"/>
    <property type="match status" value="1"/>
</dbReference>
<evidence type="ECO:0000255" key="1">
    <source>
        <dbReference type="HAMAP-Rule" id="MF_01416"/>
    </source>
</evidence>
<name>ATPD_MYCPU</name>
<organism>
    <name type="scientific">Mycoplasmopsis pulmonis (strain UAB CTIP)</name>
    <name type="common">Mycoplasma pulmonis</name>
    <dbReference type="NCBI Taxonomy" id="272635"/>
    <lineage>
        <taxon>Bacteria</taxon>
        <taxon>Bacillati</taxon>
        <taxon>Mycoplasmatota</taxon>
        <taxon>Mycoplasmoidales</taxon>
        <taxon>Metamycoplasmataceae</taxon>
        <taxon>Mycoplasmopsis</taxon>
    </lineage>
</organism>
<accession>Q98QU2</accession>
<reference key="1">
    <citation type="journal article" date="2001" name="Nucleic Acids Res.">
        <title>The complete genome sequence of the murine respiratory pathogen Mycoplasma pulmonis.</title>
        <authorList>
            <person name="Chambaud I."/>
            <person name="Heilig R."/>
            <person name="Ferris S."/>
            <person name="Barbe V."/>
            <person name="Samson D."/>
            <person name="Galisson F."/>
            <person name="Moszer I."/>
            <person name="Dybvig K."/>
            <person name="Wroblewski H."/>
            <person name="Viari A."/>
            <person name="Rocha E.P.C."/>
            <person name="Blanchard A."/>
        </authorList>
    </citation>
    <scope>NUCLEOTIDE SEQUENCE [LARGE SCALE GENOMIC DNA]</scope>
    <source>
        <strain>UAB CTIP</strain>
    </source>
</reference>